<accession>Q63WP5</accession>
<evidence type="ECO:0000255" key="1">
    <source>
        <dbReference type="HAMAP-Rule" id="MF_01972"/>
    </source>
</evidence>
<evidence type="ECO:0000256" key="2">
    <source>
        <dbReference type="SAM" id="MobiDB-lite"/>
    </source>
</evidence>
<organism>
    <name type="scientific">Burkholderia pseudomallei (strain K96243)</name>
    <dbReference type="NCBI Taxonomy" id="272560"/>
    <lineage>
        <taxon>Bacteria</taxon>
        <taxon>Pseudomonadati</taxon>
        <taxon>Pseudomonadota</taxon>
        <taxon>Betaproteobacteria</taxon>
        <taxon>Burkholderiales</taxon>
        <taxon>Burkholderiaceae</taxon>
        <taxon>Burkholderia</taxon>
        <taxon>pseudomallei group</taxon>
    </lineage>
</organism>
<dbReference type="EC" id="1.13.11.11" evidence="1"/>
<dbReference type="EMBL" id="BX571965">
    <property type="protein sequence ID" value="CAH34838.1"/>
    <property type="molecule type" value="Genomic_DNA"/>
</dbReference>
<dbReference type="RefSeq" id="WP_004530854.1">
    <property type="nucleotide sequence ID" value="NZ_CP009538.1"/>
</dbReference>
<dbReference type="RefSeq" id="YP_107471.1">
    <property type="nucleotide sequence ID" value="NC_006350.1"/>
</dbReference>
<dbReference type="SMR" id="Q63WP5"/>
<dbReference type="STRING" id="272560.BPSL0846"/>
<dbReference type="GeneID" id="93059352"/>
<dbReference type="KEGG" id="bps:BPSL0846"/>
<dbReference type="PATRIC" id="fig|272560.51.peg.753"/>
<dbReference type="eggNOG" id="COG3483">
    <property type="taxonomic scope" value="Bacteria"/>
</dbReference>
<dbReference type="UniPathway" id="UPA00333">
    <property type="reaction ID" value="UER00453"/>
</dbReference>
<dbReference type="Proteomes" id="UP000000605">
    <property type="component" value="Chromosome 1"/>
</dbReference>
<dbReference type="GO" id="GO:0020037">
    <property type="term" value="F:heme binding"/>
    <property type="evidence" value="ECO:0000250"/>
    <property type="project" value="UniProtKB"/>
</dbReference>
<dbReference type="GO" id="GO:0046872">
    <property type="term" value="F:metal ion binding"/>
    <property type="evidence" value="ECO:0007669"/>
    <property type="project" value="UniProtKB-KW"/>
</dbReference>
<dbReference type="GO" id="GO:0004833">
    <property type="term" value="F:tryptophan 2,3-dioxygenase activity"/>
    <property type="evidence" value="ECO:0000250"/>
    <property type="project" value="UniProtKB"/>
</dbReference>
<dbReference type="GO" id="GO:0019442">
    <property type="term" value="P:L-tryptophan catabolic process to acetyl-CoA"/>
    <property type="evidence" value="ECO:0007669"/>
    <property type="project" value="TreeGrafter"/>
</dbReference>
<dbReference type="GO" id="GO:0019441">
    <property type="term" value="P:L-tryptophan catabolic process to kynurenine"/>
    <property type="evidence" value="ECO:0000250"/>
    <property type="project" value="UniProtKB"/>
</dbReference>
<dbReference type="FunFam" id="1.20.58.480:FF:000001">
    <property type="entry name" value="Tryptophan 2,3-dioxygenase"/>
    <property type="match status" value="1"/>
</dbReference>
<dbReference type="Gene3D" id="1.20.58.480">
    <property type="match status" value="1"/>
</dbReference>
<dbReference type="HAMAP" id="MF_01972">
    <property type="entry name" value="T23O"/>
    <property type="match status" value="1"/>
</dbReference>
<dbReference type="InterPro" id="IPR037217">
    <property type="entry name" value="Trp/Indoleamine_2_3_dOase-like"/>
</dbReference>
<dbReference type="InterPro" id="IPR017485">
    <property type="entry name" value="Trp_2-3-dOase_bac"/>
</dbReference>
<dbReference type="InterPro" id="IPR004981">
    <property type="entry name" value="Trp_2_3_dOase"/>
</dbReference>
<dbReference type="NCBIfam" id="TIGR03036">
    <property type="entry name" value="trp_2_3_diox"/>
    <property type="match status" value="1"/>
</dbReference>
<dbReference type="PANTHER" id="PTHR10138">
    <property type="entry name" value="TRYPTOPHAN 2,3-DIOXYGENASE"/>
    <property type="match status" value="1"/>
</dbReference>
<dbReference type="PANTHER" id="PTHR10138:SF0">
    <property type="entry name" value="TRYPTOPHAN 2,3-DIOXYGENASE"/>
    <property type="match status" value="1"/>
</dbReference>
<dbReference type="Pfam" id="PF03301">
    <property type="entry name" value="Trp_dioxygenase"/>
    <property type="match status" value="1"/>
</dbReference>
<dbReference type="SUPFAM" id="SSF140959">
    <property type="entry name" value="Indolic compounds 2,3-dioxygenase-like"/>
    <property type="match status" value="1"/>
</dbReference>
<keyword id="KW-0223">Dioxygenase</keyword>
<keyword id="KW-0349">Heme</keyword>
<keyword id="KW-0408">Iron</keyword>
<keyword id="KW-0479">Metal-binding</keyword>
<keyword id="KW-0560">Oxidoreductase</keyword>
<keyword id="KW-1185">Reference proteome</keyword>
<keyword id="KW-0823">Tryptophan catabolism</keyword>
<gene>
    <name evidence="1" type="primary">kynA</name>
    <name type="ordered locus">BPSL0846</name>
</gene>
<comment type="function">
    <text evidence="1">Heme-dependent dioxygenase that catalyzes the oxidative cleavage of the L-tryptophan (L-Trp) pyrrole ring and converts L-tryptophan to N-formyl-L-kynurenine. Catalyzes the oxidative cleavage of the indole moiety.</text>
</comment>
<comment type="catalytic activity">
    <reaction evidence="1">
        <text>L-tryptophan + O2 = N-formyl-L-kynurenine</text>
        <dbReference type="Rhea" id="RHEA:24536"/>
        <dbReference type="ChEBI" id="CHEBI:15379"/>
        <dbReference type="ChEBI" id="CHEBI:57912"/>
        <dbReference type="ChEBI" id="CHEBI:58629"/>
        <dbReference type="EC" id="1.13.11.11"/>
    </reaction>
</comment>
<comment type="cofactor">
    <cofactor evidence="1">
        <name>heme</name>
        <dbReference type="ChEBI" id="CHEBI:30413"/>
    </cofactor>
    <text evidence="1">Binds 1 heme group per subunit.</text>
</comment>
<comment type="pathway">
    <text evidence="1">Amino-acid degradation; L-tryptophan degradation via kynurenine pathway; L-kynurenine from L-tryptophan: step 1/2.</text>
</comment>
<comment type="subunit">
    <text evidence="1">Homotetramer.</text>
</comment>
<comment type="similarity">
    <text evidence="1">Belongs to the tryptophan 2,3-dioxygenase family.</text>
</comment>
<proteinExistence type="inferred from homology"/>
<protein>
    <recommendedName>
        <fullName evidence="1">Tryptophan 2,3-dioxygenase</fullName>
        <shortName evidence="1">TDO</shortName>
        <ecNumber evidence="1">1.13.11.11</ecNumber>
    </recommendedName>
    <alternativeName>
        <fullName evidence="1">Tryptamin 2,3-dioxygenase</fullName>
    </alternativeName>
    <alternativeName>
        <fullName evidence="1">Tryptophan oxygenase</fullName>
        <shortName evidence="1">TO</shortName>
        <shortName evidence="1">TRPO</shortName>
    </alternativeName>
    <alternativeName>
        <fullName evidence="1">Tryptophan pyrrolase</fullName>
    </alternativeName>
    <alternativeName>
        <fullName evidence="1">Tryptophanase</fullName>
    </alternativeName>
</protein>
<feature type="chain" id="PRO_0000360111" description="Tryptophan 2,3-dioxygenase">
    <location>
        <begin position="1"/>
        <end position="306"/>
    </location>
</feature>
<feature type="region of interest" description="Disordered" evidence="2">
    <location>
        <begin position="1"/>
        <end position="33"/>
    </location>
</feature>
<feature type="binding site" evidence="1">
    <location>
        <begin position="75"/>
        <end position="79"/>
    </location>
    <ligand>
        <name>substrate</name>
    </ligand>
</feature>
<feature type="binding site" evidence="1">
    <location>
        <position position="137"/>
    </location>
    <ligand>
        <name>substrate</name>
    </ligand>
</feature>
<feature type="binding site" evidence="1">
    <location>
        <position position="141"/>
    </location>
    <ligand>
        <name>substrate</name>
    </ligand>
</feature>
<feature type="binding site" description="axial binding residue" evidence="1">
    <location>
        <position position="264"/>
    </location>
    <ligand>
        <name>heme</name>
        <dbReference type="ChEBI" id="CHEBI:30413"/>
    </ligand>
    <ligandPart>
        <name>Fe</name>
        <dbReference type="ChEBI" id="CHEBI:18248"/>
    </ligandPart>
</feature>
<feature type="binding site" evidence="1">
    <location>
        <position position="278"/>
    </location>
    <ligand>
        <name>substrate</name>
    </ligand>
</feature>
<name>T23O_BURPS</name>
<sequence>MQPPGDDAAPRCPFAGAHAPDAPHVPEAAGDDAQAGWHRAQLDFSQSMSYGDYLSLDPILDAQHPRSPDHNEMLFIIQHQTSELWMKLALYELRAALASIRDDALPPAFKMLARVSRVLEQLVQAWNVLATMTPSEYSAMRPYLGASSGFQSYQYRELEFILGNKNAQMLRPHAHRPAIHAHLEASLQAPSLYDEVIRLLARRGFPIAPERLDADWTQPTRHDRTVEAAWLAVYREPNAHWELYEMAEELVDLEDAFRQWRFRHVTTVERIIGFKQGTGGTSGAPYLRKMLDVVLFPELWHVRTTL</sequence>
<reference key="1">
    <citation type="journal article" date="2004" name="Proc. Natl. Acad. Sci. U.S.A.">
        <title>Genomic plasticity of the causative agent of melioidosis, Burkholderia pseudomallei.</title>
        <authorList>
            <person name="Holden M.T.G."/>
            <person name="Titball R.W."/>
            <person name="Peacock S.J."/>
            <person name="Cerdeno-Tarraga A.-M."/>
            <person name="Atkins T."/>
            <person name="Crossman L.C."/>
            <person name="Pitt T."/>
            <person name="Churcher C."/>
            <person name="Mungall K.L."/>
            <person name="Bentley S.D."/>
            <person name="Sebaihia M."/>
            <person name="Thomson N.R."/>
            <person name="Bason N."/>
            <person name="Beacham I.R."/>
            <person name="Brooks K."/>
            <person name="Brown K.A."/>
            <person name="Brown N.F."/>
            <person name="Challis G.L."/>
            <person name="Cherevach I."/>
            <person name="Chillingworth T."/>
            <person name="Cronin A."/>
            <person name="Crossett B."/>
            <person name="Davis P."/>
            <person name="DeShazer D."/>
            <person name="Feltwell T."/>
            <person name="Fraser A."/>
            <person name="Hance Z."/>
            <person name="Hauser H."/>
            <person name="Holroyd S."/>
            <person name="Jagels K."/>
            <person name="Keith K.E."/>
            <person name="Maddison M."/>
            <person name="Moule S."/>
            <person name="Price C."/>
            <person name="Quail M.A."/>
            <person name="Rabbinowitsch E."/>
            <person name="Rutherford K."/>
            <person name="Sanders M."/>
            <person name="Simmonds M."/>
            <person name="Songsivilai S."/>
            <person name="Stevens K."/>
            <person name="Tumapa S."/>
            <person name="Vesaratchavest M."/>
            <person name="Whitehead S."/>
            <person name="Yeats C."/>
            <person name="Barrell B.G."/>
            <person name="Oyston P.C.F."/>
            <person name="Parkhill J."/>
        </authorList>
    </citation>
    <scope>NUCLEOTIDE SEQUENCE [LARGE SCALE GENOMIC DNA]</scope>
    <source>
        <strain>K96243</strain>
    </source>
</reference>